<gene>
    <name evidence="1" type="primary">dnaK</name>
    <name type="ordered locus">Lferr_2291</name>
</gene>
<organism>
    <name type="scientific">Acidithiobacillus ferrooxidans (strain ATCC 53993 / BNL-5-31)</name>
    <name type="common">Leptospirillum ferrooxidans (ATCC 53993)</name>
    <dbReference type="NCBI Taxonomy" id="380394"/>
    <lineage>
        <taxon>Bacteria</taxon>
        <taxon>Pseudomonadati</taxon>
        <taxon>Pseudomonadota</taxon>
        <taxon>Acidithiobacillia</taxon>
        <taxon>Acidithiobacillales</taxon>
        <taxon>Acidithiobacillaceae</taxon>
        <taxon>Acidithiobacillus</taxon>
    </lineage>
</organism>
<name>DNAK_ACIF5</name>
<comment type="function">
    <text evidence="1">Acts as a chaperone.</text>
</comment>
<comment type="induction">
    <text evidence="1">By stress conditions e.g. heat shock.</text>
</comment>
<comment type="similarity">
    <text evidence="1">Belongs to the heat shock protein 70 family.</text>
</comment>
<protein>
    <recommendedName>
        <fullName evidence="1">Chaperone protein DnaK</fullName>
    </recommendedName>
    <alternativeName>
        <fullName evidence="1">HSP70</fullName>
    </alternativeName>
    <alternativeName>
        <fullName evidence="1">Heat shock 70 kDa protein</fullName>
    </alternativeName>
    <alternativeName>
        <fullName evidence="1">Heat shock protein 70</fullName>
    </alternativeName>
</protein>
<reference key="1">
    <citation type="submission" date="2008-08" db="EMBL/GenBank/DDBJ databases">
        <title>Complete sequence of Acidithiobacillus ferrooxidans ATCC 53993.</title>
        <authorList>
            <person name="Lucas S."/>
            <person name="Copeland A."/>
            <person name="Lapidus A."/>
            <person name="Glavina del Rio T."/>
            <person name="Dalin E."/>
            <person name="Tice H."/>
            <person name="Bruce D."/>
            <person name="Goodwin L."/>
            <person name="Pitluck S."/>
            <person name="Sims D."/>
            <person name="Brettin T."/>
            <person name="Detter J.C."/>
            <person name="Han C."/>
            <person name="Kuske C.R."/>
            <person name="Larimer F."/>
            <person name="Land M."/>
            <person name="Hauser L."/>
            <person name="Kyrpides N."/>
            <person name="Lykidis A."/>
            <person name="Borole A.P."/>
        </authorList>
    </citation>
    <scope>NUCLEOTIDE SEQUENCE [LARGE SCALE GENOMIC DNA]</scope>
    <source>
        <strain>ATCC 53993 / BNL-5-31</strain>
    </source>
</reference>
<sequence length="634" mass="68222">MAKVIGIDLGTTNSCVAVMEGDKVKVIENSEGKRTTPSIVAITEEGEVLVGEAAKRQAVTNPENTVYEVKRLIGRKFDDAEVQKDLKHVPYKVIKADNGDAWVEVRDKKYSAQQISAFILQKMKKTAEDYLGEKVTEAVITVPAYFNDAQRQATKDAGRIAGLEVKRIINEPTAAALAFGEDKKPGDSKIAVYDLGGGTFDISIIEIAEMEGEHQFEVLSTNGDTFLGGGDFDSRVINYLADSFKAESGIDLRGDRLAMQRLKEAAEKAKIELSSAQQTDVNLPFITADQSGPKHLNMKLTRAKLESLVEDLIDRSMAPCRVAMKDANLATSRITDVILVGGQSRMPKVQEKVKDFFGQDPRKDVNPDEAVAIGAAIQGAVLSGEKKDVLLMDVTPLSLGIETLGGVMTKLIEKNTTIPTRKSQIFSTAEDNQSAVTVHVLQGERELARDNKSLARFDLTDIANAPRGMPQIEVTFDIDANGILHVSAKDNQTGKEQSIKITASSGLSEEEIKRMIQEAEAHAADDKKARALIEARNEADASVHGARKAVEEHAAAPEHDKTKVTEAISAVENAAKGEDVEAIKGAVATLMAAMSALLQSAAAGQAQAESGAGAQGNAKPDDVVDAEFEEVDKK</sequence>
<evidence type="ECO:0000255" key="1">
    <source>
        <dbReference type="HAMAP-Rule" id="MF_00332"/>
    </source>
</evidence>
<evidence type="ECO:0000256" key="2">
    <source>
        <dbReference type="SAM" id="MobiDB-lite"/>
    </source>
</evidence>
<accession>B5ENA3</accession>
<proteinExistence type="inferred from homology"/>
<feature type="chain" id="PRO_1000119657" description="Chaperone protein DnaK">
    <location>
        <begin position="1"/>
        <end position="634"/>
    </location>
</feature>
<feature type="region of interest" description="Disordered" evidence="2">
    <location>
        <begin position="601"/>
        <end position="634"/>
    </location>
</feature>
<feature type="compositionally biased region" description="Low complexity" evidence="2">
    <location>
        <begin position="601"/>
        <end position="618"/>
    </location>
</feature>
<feature type="compositionally biased region" description="Acidic residues" evidence="2">
    <location>
        <begin position="623"/>
        <end position="634"/>
    </location>
</feature>
<feature type="modified residue" description="Phosphothreonine; by autocatalysis" evidence="1">
    <location>
        <position position="199"/>
    </location>
</feature>
<keyword id="KW-0067">ATP-binding</keyword>
<keyword id="KW-0143">Chaperone</keyword>
<keyword id="KW-0547">Nucleotide-binding</keyword>
<keyword id="KW-0597">Phosphoprotein</keyword>
<keyword id="KW-0346">Stress response</keyword>
<dbReference type="EMBL" id="CP001132">
    <property type="protein sequence ID" value="ACH84492.1"/>
    <property type="molecule type" value="Genomic_DNA"/>
</dbReference>
<dbReference type="RefSeq" id="WP_009563301.1">
    <property type="nucleotide sequence ID" value="NC_011206.1"/>
</dbReference>
<dbReference type="SMR" id="B5ENA3"/>
<dbReference type="GeneID" id="65281710"/>
<dbReference type="KEGG" id="afe:Lferr_2291"/>
<dbReference type="eggNOG" id="COG0443">
    <property type="taxonomic scope" value="Bacteria"/>
</dbReference>
<dbReference type="HOGENOM" id="CLU_005965_2_1_6"/>
<dbReference type="GO" id="GO:0005524">
    <property type="term" value="F:ATP binding"/>
    <property type="evidence" value="ECO:0007669"/>
    <property type="project" value="UniProtKB-UniRule"/>
</dbReference>
<dbReference type="GO" id="GO:0140662">
    <property type="term" value="F:ATP-dependent protein folding chaperone"/>
    <property type="evidence" value="ECO:0007669"/>
    <property type="project" value="InterPro"/>
</dbReference>
<dbReference type="GO" id="GO:0051082">
    <property type="term" value="F:unfolded protein binding"/>
    <property type="evidence" value="ECO:0007669"/>
    <property type="project" value="InterPro"/>
</dbReference>
<dbReference type="CDD" id="cd10234">
    <property type="entry name" value="ASKHA_NBD_HSP70_DnaK-like"/>
    <property type="match status" value="1"/>
</dbReference>
<dbReference type="FunFam" id="2.60.34.10:FF:000014">
    <property type="entry name" value="Chaperone protein DnaK HSP70"/>
    <property type="match status" value="1"/>
</dbReference>
<dbReference type="FunFam" id="3.30.30.30:FF:000003">
    <property type="entry name" value="Heat shock protein 9"/>
    <property type="match status" value="1"/>
</dbReference>
<dbReference type="FunFam" id="1.20.1270.10:FF:000001">
    <property type="entry name" value="Molecular chaperone DnaK"/>
    <property type="match status" value="1"/>
</dbReference>
<dbReference type="FunFam" id="3.30.420.40:FF:000004">
    <property type="entry name" value="Molecular chaperone DnaK"/>
    <property type="match status" value="1"/>
</dbReference>
<dbReference type="FunFam" id="3.90.640.10:FF:000003">
    <property type="entry name" value="Molecular chaperone DnaK"/>
    <property type="match status" value="1"/>
</dbReference>
<dbReference type="Gene3D" id="1.20.1270.10">
    <property type="match status" value="1"/>
</dbReference>
<dbReference type="Gene3D" id="3.30.420.40">
    <property type="match status" value="2"/>
</dbReference>
<dbReference type="Gene3D" id="3.90.640.10">
    <property type="entry name" value="Actin, Chain A, domain 4"/>
    <property type="match status" value="1"/>
</dbReference>
<dbReference type="Gene3D" id="2.60.34.10">
    <property type="entry name" value="Substrate Binding Domain Of DNAk, Chain A, domain 1"/>
    <property type="match status" value="1"/>
</dbReference>
<dbReference type="HAMAP" id="MF_00332">
    <property type="entry name" value="DnaK"/>
    <property type="match status" value="1"/>
</dbReference>
<dbReference type="InterPro" id="IPR043129">
    <property type="entry name" value="ATPase_NBD"/>
</dbReference>
<dbReference type="InterPro" id="IPR012725">
    <property type="entry name" value="Chaperone_DnaK"/>
</dbReference>
<dbReference type="InterPro" id="IPR018181">
    <property type="entry name" value="Heat_shock_70_CS"/>
</dbReference>
<dbReference type="InterPro" id="IPR029048">
    <property type="entry name" value="HSP70_C_sf"/>
</dbReference>
<dbReference type="InterPro" id="IPR029047">
    <property type="entry name" value="HSP70_peptide-bd_sf"/>
</dbReference>
<dbReference type="InterPro" id="IPR013126">
    <property type="entry name" value="Hsp_70_fam"/>
</dbReference>
<dbReference type="NCBIfam" id="NF001413">
    <property type="entry name" value="PRK00290.1"/>
    <property type="match status" value="1"/>
</dbReference>
<dbReference type="NCBIfam" id="TIGR02350">
    <property type="entry name" value="prok_dnaK"/>
    <property type="match status" value="1"/>
</dbReference>
<dbReference type="PANTHER" id="PTHR19375">
    <property type="entry name" value="HEAT SHOCK PROTEIN 70KDA"/>
    <property type="match status" value="1"/>
</dbReference>
<dbReference type="Pfam" id="PF00012">
    <property type="entry name" value="HSP70"/>
    <property type="match status" value="1"/>
</dbReference>
<dbReference type="PRINTS" id="PR00301">
    <property type="entry name" value="HEATSHOCK70"/>
</dbReference>
<dbReference type="SUPFAM" id="SSF53067">
    <property type="entry name" value="Actin-like ATPase domain"/>
    <property type="match status" value="2"/>
</dbReference>
<dbReference type="SUPFAM" id="SSF100934">
    <property type="entry name" value="Heat shock protein 70kD (HSP70), C-terminal subdomain"/>
    <property type="match status" value="1"/>
</dbReference>
<dbReference type="SUPFAM" id="SSF100920">
    <property type="entry name" value="Heat shock protein 70kD (HSP70), peptide-binding domain"/>
    <property type="match status" value="1"/>
</dbReference>
<dbReference type="PROSITE" id="PS00297">
    <property type="entry name" value="HSP70_1"/>
    <property type="match status" value="1"/>
</dbReference>
<dbReference type="PROSITE" id="PS00329">
    <property type="entry name" value="HSP70_2"/>
    <property type="match status" value="1"/>
</dbReference>
<dbReference type="PROSITE" id="PS01036">
    <property type="entry name" value="HSP70_3"/>
    <property type="match status" value="1"/>
</dbReference>